<evidence type="ECO:0000250" key="1"/>
<evidence type="ECO:0000255" key="2">
    <source>
        <dbReference type="PROSITE-ProRule" id="PRU00507"/>
    </source>
</evidence>
<evidence type="ECO:0000256" key="3">
    <source>
        <dbReference type="SAM" id="MobiDB-lite"/>
    </source>
</evidence>
<evidence type="ECO:0000305" key="4"/>
<comment type="function">
    <text evidence="1">Component of the nascent polypeptide-associated complex (NAC), a dynamic component of the ribosomal exit tunnel, protecting the emerging polypeptides from interaction with other cytoplasmic proteins to ensure appropriate nascent protein targeting. The NAC complex also promotes mitochondrial protein import by enhancing productive ribosome interactions with the outer mitochondrial membrane and blocks the inappropriate interaction of ribosomes translating non-secretory nascent polypeptides with translocation sites in the membrane of the endoplasmic reticulum. EGD1 may act as a transcription factor that exert a negative effect on the expression of several genes that are transcribed by RNA polymerase II.</text>
</comment>
<comment type="subunit">
    <text evidence="1">Part of the nascent polypeptide-associated complex (NAC), consisting of EGD2 and EGD1. NAC associates with ribosomes via EGD1 (By similarity).</text>
</comment>
<comment type="subcellular location">
    <subcellularLocation>
        <location evidence="1">Cytoplasm</location>
    </subcellularLocation>
    <subcellularLocation>
        <location evidence="1">Nucleus</location>
    </subcellularLocation>
    <text evidence="1">Predominantly cytoplasmic, may also transiently localize to the nucleus.</text>
</comment>
<comment type="similarity">
    <text evidence="4">Belongs to the NAC-beta family.</text>
</comment>
<proteinExistence type="inferred from homology"/>
<gene>
    <name type="primary">EGD1</name>
    <name type="ORF">LELG_00545</name>
</gene>
<protein>
    <recommendedName>
        <fullName>Nascent polypeptide-associated complex subunit beta</fullName>
        <shortName>NAC-beta</shortName>
    </recommendedName>
    <alternativeName>
        <fullName>Beta-NAC</fullName>
    </alternativeName>
</protein>
<accession>A5DT59</accession>
<reference key="1">
    <citation type="journal article" date="2009" name="Nature">
        <title>Evolution of pathogenicity and sexual reproduction in eight Candida genomes.</title>
        <authorList>
            <person name="Butler G."/>
            <person name="Rasmussen M.D."/>
            <person name="Lin M.F."/>
            <person name="Santos M.A.S."/>
            <person name="Sakthikumar S."/>
            <person name="Munro C.A."/>
            <person name="Rheinbay E."/>
            <person name="Grabherr M."/>
            <person name="Forche A."/>
            <person name="Reedy J.L."/>
            <person name="Agrafioti I."/>
            <person name="Arnaud M.B."/>
            <person name="Bates S."/>
            <person name="Brown A.J.P."/>
            <person name="Brunke S."/>
            <person name="Costanzo M.C."/>
            <person name="Fitzpatrick D.A."/>
            <person name="de Groot P.W.J."/>
            <person name="Harris D."/>
            <person name="Hoyer L.L."/>
            <person name="Hube B."/>
            <person name="Klis F.M."/>
            <person name="Kodira C."/>
            <person name="Lennard N."/>
            <person name="Logue M.E."/>
            <person name="Martin R."/>
            <person name="Neiman A.M."/>
            <person name="Nikolaou E."/>
            <person name="Quail M.A."/>
            <person name="Quinn J."/>
            <person name="Santos M.C."/>
            <person name="Schmitzberger F.F."/>
            <person name="Sherlock G."/>
            <person name="Shah P."/>
            <person name="Silverstein K.A.T."/>
            <person name="Skrzypek M.S."/>
            <person name="Soll D."/>
            <person name="Staggs R."/>
            <person name="Stansfield I."/>
            <person name="Stumpf M.P.H."/>
            <person name="Sudbery P.E."/>
            <person name="Srikantha T."/>
            <person name="Zeng Q."/>
            <person name="Berman J."/>
            <person name="Berriman M."/>
            <person name="Heitman J."/>
            <person name="Gow N.A.R."/>
            <person name="Lorenz M.C."/>
            <person name="Birren B.W."/>
            <person name="Kellis M."/>
            <person name="Cuomo C.A."/>
        </authorList>
    </citation>
    <scope>NUCLEOTIDE SEQUENCE [LARGE SCALE GENOMIC DNA]</scope>
    <source>
        <strain>ATCC 11503 / BCRC 21390 / CBS 2605 / JCM 1781 / NBRC 1676 / NRRL YB-4239</strain>
    </source>
</reference>
<keyword id="KW-0963">Cytoplasm</keyword>
<keyword id="KW-0539">Nucleus</keyword>
<keyword id="KW-0653">Protein transport</keyword>
<keyword id="KW-1185">Reference proteome</keyword>
<keyword id="KW-0678">Repressor</keyword>
<keyword id="KW-0804">Transcription</keyword>
<keyword id="KW-0805">Transcription regulation</keyword>
<keyword id="KW-0813">Transport</keyword>
<dbReference type="EMBL" id="CH981524">
    <property type="protein sequence ID" value="EDK42367.1"/>
    <property type="molecule type" value="Genomic_DNA"/>
</dbReference>
<dbReference type="RefSeq" id="XP_001528025.1">
    <property type="nucleotide sequence ID" value="XM_001527975.1"/>
</dbReference>
<dbReference type="SMR" id="A5DT59"/>
<dbReference type="FunCoup" id="A5DT59">
    <property type="interactions" value="1189"/>
</dbReference>
<dbReference type="STRING" id="379508.A5DT59"/>
<dbReference type="GeneID" id="5235733"/>
<dbReference type="KEGG" id="lel:PVL30_000530"/>
<dbReference type="VEuPathDB" id="FungiDB:LELG_00545"/>
<dbReference type="eggNOG" id="KOG2240">
    <property type="taxonomic scope" value="Eukaryota"/>
</dbReference>
<dbReference type="HOGENOM" id="CLU_098726_2_2_1"/>
<dbReference type="InParanoid" id="A5DT59"/>
<dbReference type="OMA" id="AGDTYME"/>
<dbReference type="OrthoDB" id="8033832at2759"/>
<dbReference type="Proteomes" id="UP000001996">
    <property type="component" value="Unassembled WGS sequence"/>
</dbReference>
<dbReference type="GO" id="GO:0005737">
    <property type="term" value="C:cytoplasm"/>
    <property type="evidence" value="ECO:0007669"/>
    <property type="project" value="UniProtKB-SubCell"/>
</dbReference>
<dbReference type="GO" id="GO:0005634">
    <property type="term" value="C:nucleus"/>
    <property type="evidence" value="ECO:0007669"/>
    <property type="project" value="UniProtKB-SubCell"/>
</dbReference>
<dbReference type="GO" id="GO:0015031">
    <property type="term" value="P:protein transport"/>
    <property type="evidence" value="ECO:0007669"/>
    <property type="project" value="UniProtKB-KW"/>
</dbReference>
<dbReference type="CDD" id="cd22055">
    <property type="entry name" value="NAC_BTF3"/>
    <property type="match status" value="1"/>
</dbReference>
<dbReference type="FunFam" id="2.20.70.30:FF:000001">
    <property type="entry name" value="Transcription factor BTF3 homolog"/>
    <property type="match status" value="1"/>
</dbReference>
<dbReference type="Gene3D" id="2.20.70.30">
    <property type="entry name" value="Nascent polypeptide-associated complex domain"/>
    <property type="match status" value="1"/>
</dbReference>
<dbReference type="InterPro" id="IPR039370">
    <property type="entry name" value="BTF3"/>
</dbReference>
<dbReference type="InterPro" id="IPR038187">
    <property type="entry name" value="NAC_A/B_dom_sf"/>
</dbReference>
<dbReference type="InterPro" id="IPR002715">
    <property type="entry name" value="Nas_poly-pep-assoc_cplx_dom"/>
</dbReference>
<dbReference type="PANTHER" id="PTHR10351">
    <property type="entry name" value="TRANSCRIPTION FACTOR BTF3 FAMILY MEMBER"/>
    <property type="match status" value="1"/>
</dbReference>
<dbReference type="Pfam" id="PF01849">
    <property type="entry name" value="NAC"/>
    <property type="match status" value="1"/>
</dbReference>
<dbReference type="SMART" id="SM01407">
    <property type="entry name" value="NAC"/>
    <property type="match status" value="1"/>
</dbReference>
<dbReference type="PROSITE" id="PS51151">
    <property type="entry name" value="NAC_AB"/>
    <property type="match status" value="1"/>
</dbReference>
<sequence>MPVDPEKLAKLQKSTAKKVGGSRVKAKKGVKTEQDDTKLIETLGKLKATKIEGVEEANFFKDDGKVLHFNRVGVQGAPAANTFAFTGYPQEKNITQLIPQILPQLGAENLEILRQLAEQIQAGKNPKDFGAAGEAGATEEANEDIPDLVDQKFDDVE</sequence>
<organism>
    <name type="scientific">Lodderomyces elongisporus (strain ATCC 11503 / CBS 2605 / JCM 1781 / NBRC 1676 / NRRL YB-4239)</name>
    <name type="common">Yeast</name>
    <name type="synonym">Saccharomyces elongisporus</name>
    <dbReference type="NCBI Taxonomy" id="379508"/>
    <lineage>
        <taxon>Eukaryota</taxon>
        <taxon>Fungi</taxon>
        <taxon>Dikarya</taxon>
        <taxon>Ascomycota</taxon>
        <taxon>Saccharomycotina</taxon>
        <taxon>Pichiomycetes</taxon>
        <taxon>Debaryomycetaceae</taxon>
        <taxon>Candida/Lodderomyces clade</taxon>
        <taxon>Lodderomyces</taxon>
    </lineage>
</organism>
<feature type="chain" id="PRO_0000294529" description="Nascent polypeptide-associated complex subunit beta">
    <location>
        <begin position="1"/>
        <end position="157"/>
    </location>
</feature>
<feature type="domain" description="NAC-A/B" evidence="2">
    <location>
        <begin position="33"/>
        <end position="98"/>
    </location>
</feature>
<feature type="region of interest" description="Disordered" evidence="3">
    <location>
        <begin position="1"/>
        <end position="31"/>
    </location>
</feature>
<feature type="region of interest" description="Disordered" evidence="3">
    <location>
        <begin position="125"/>
        <end position="157"/>
    </location>
</feature>
<feature type="compositionally biased region" description="Low complexity" evidence="3">
    <location>
        <begin position="130"/>
        <end position="139"/>
    </location>
</feature>
<name>NACB_LODEL</name>